<gene>
    <name evidence="1" type="primary">ispF</name>
    <name type="ordered locus">Asuc_2031</name>
</gene>
<reference key="1">
    <citation type="journal article" date="2010" name="BMC Genomics">
        <title>A genomic perspective on the potential of Actinobacillus succinogenes for industrial succinate production.</title>
        <authorList>
            <person name="McKinlay J.B."/>
            <person name="Laivenieks M."/>
            <person name="Schindler B.D."/>
            <person name="McKinlay A.A."/>
            <person name="Siddaramappa S."/>
            <person name="Challacombe J.F."/>
            <person name="Lowry S.R."/>
            <person name="Clum A."/>
            <person name="Lapidus A.L."/>
            <person name="Burkhart K.B."/>
            <person name="Harkins V."/>
            <person name="Vieille C."/>
        </authorList>
    </citation>
    <scope>NUCLEOTIDE SEQUENCE [LARGE SCALE GENOMIC DNA]</scope>
    <source>
        <strain>ATCC 55618 / DSM 22257 / CCUG 43843 / 130Z</strain>
    </source>
</reference>
<comment type="function">
    <text evidence="1">Involved in the biosynthesis of isopentenyl diphosphate (IPP) and dimethylallyl diphosphate (DMAPP), two major building blocks of isoprenoid compounds. Catalyzes the conversion of 4-diphosphocytidyl-2-C-methyl-D-erythritol 2-phosphate (CDP-ME2P) to 2-C-methyl-D-erythritol 2,4-cyclodiphosphate (ME-CPP) with a corresponding release of cytidine 5-monophosphate (CMP).</text>
</comment>
<comment type="catalytic activity">
    <reaction evidence="1">
        <text>4-CDP-2-C-methyl-D-erythritol 2-phosphate = 2-C-methyl-D-erythritol 2,4-cyclic diphosphate + CMP</text>
        <dbReference type="Rhea" id="RHEA:23864"/>
        <dbReference type="ChEBI" id="CHEBI:57919"/>
        <dbReference type="ChEBI" id="CHEBI:58483"/>
        <dbReference type="ChEBI" id="CHEBI:60377"/>
        <dbReference type="EC" id="4.6.1.12"/>
    </reaction>
</comment>
<comment type="cofactor">
    <cofactor evidence="1">
        <name>a divalent metal cation</name>
        <dbReference type="ChEBI" id="CHEBI:60240"/>
    </cofactor>
    <text evidence="1">Binds 1 divalent metal cation per subunit.</text>
</comment>
<comment type="pathway">
    <text evidence="1">Isoprenoid biosynthesis; isopentenyl diphosphate biosynthesis via DXP pathway; isopentenyl diphosphate from 1-deoxy-D-xylulose 5-phosphate: step 4/6.</text>
</comment>
<comment type="subunit">
    <text evidence="1">Homotrimer.</text>
</comment>
<comment type="similarity">
    <text evidence="1">Belongs to the IspF family.</text>
</comment>
<dbReference type="EC" id="4.6.1.12" evidence="1"/>
<dbReference type="EMBL" id="CP000746">
    <property type="protein sequence ID" value="ABR75377.1"/>
    <property type="molecule type" value="Genomic_DNA"/>
</dbReference>
<dbReference type="RefSeq" id="WP_012073753.1">
    <property type="nucleotide sequence ID" value="NC_009655.1"/>
</dbReference>
<dbReference type="SMR" id="A6VQY0"/>
<dbReference type="STRING" id="339671.Asuc_2031"/>
<dbReference type="KEGG" id="asu:Asuc_2031"/>
<dbReference type="eggNOG" id="COG0245">
    <property type="taxonomic scope" value="Bacteria"/>
</dbReference>
<dbReference type="HOGENOM" id="CLU_084630_2_0_6"/>
<dbReference type="OrthoDB" id="9804336at2"/>
<dbReference type="UniPathway" id="UPA00056">
    <property type="reaction ID" value="UER00095"/>
</dbReference>
<dbReference type="Proteomes" id="UP000001114">
    <property type="component" value="Chromosome"/>
</dbReference>
<dbReference type="GO" id="GO:0008685">
    <property type="term" value="F:2-C-methyl-D-erythritol 2,4-cyclodiphosphate synthase activity"/>
    <property type="evidence" value="ECO:0007669"/>
    <property type="project" value="UniProtKB-UniRule"/>
</dbReference>
<dbReference type="GO" id="GO:0046872">
    <property type="term" value="F:metal ion binding"/>
    <property type="evidence" value="ECO:0007669"/>
    <property type="project" value="UniProtKB-KW"/>
</dbReference>
<dbReference type="GO" id="GO:0019288">
    <property type="term" value="P:isopentenyl diphosphate biosynthetic process, methylerythritol 4-phosphate pathway"/>
    <property type="evidence" value="ECO:0007669"/>
    <property type="project" value="UniProtKB-UniRule"/>
</dbReference>
<dbReference type="GO" id="GO:0016114">
    <property type="term" value="P:terpenoid biosynthetic process"/>
    <property type="evidence" value="ECO:0007669"/>
    <property type="project" value="InterPro"/>
</dbReference>
<dbReference type="CDD" id="cd00554">
    <property type="entry name" value="MECDP_synthase"/>
    <property type="match status" value="1"/>
</dbReference>
<dbReference type="FunFam" id="3.30.1330.50:FF:000001">
    <property type="entry name" value="2-C-methyl-D-erythritol 2,4-cyclodiphosphate synthase"/>
    <property type="match status" value="1"/>
</dbReference>
<dbReference type="Gene3D" id="3.30.1330.50">
    <property type="entry name" value="2-C-methyl-D-erythritol 2,4-cyclodiphosphate synthase"/>
    <property type="match status" value="1"/>
</dbReference>
<dbReference type="HAMAP" id="MF_00107">
    <property type="entry name" value="IspF"/>
    <property type="match status" value="1"/>
</dbReference>
<dbReference type="InterPro" id="IPR003526">
    <property type="entry name" value="MECDP_synthase"/>
</dbReference>
<dbReference type="InterPro" id="IPR020555">
    <property type="entry name" value="MECDP_synthase_CS"/>
</dbReference>
<dbReference type="InterPro" id="IPR036571">
    <property type="entry name" value="MECDP_synthase_sf"/>
</dbReference>
<dbReference type="NCBIfam" id="TIGR00151">
    <property type="entry name" value="ispF"/>
    <property type="match status" value="1"/>
</dbReference>
<dbReference type="PANTHER" id="PTHR43181">
    <property type="entry name" value="2-C-METHYL-D-ERYTHRITOL 2,4-CYCLODIPHOSPHATE SYNTHASE, CHLOROPLASTIC"/>
    <property type="match status" value="1"/>
</dbReference>
<dbReference type="PANTHER" id="PTHR43181:SF1">
    <property type="entry name" value="2-C-METHYL-D-ERYTHRITOL 2,4-CYCLODIPHOSPHATE SYNTHASE, CHLOROPLASTIC"/>
    <property type="match status" value="1"/>
</dbReference>
<dbReference type="Pfam" id="PF02542">
    <property type="entry name" value="YgbB"/>
    <property type="match status" value="1"/>
</dbReference>
<dbReference type="SUPFAM" id="SSF69765">
    <property type="entry name" value="IpsF-like"/>
    <property type="match status" value="1"/>
</dbReference>
<dbReference type="PROSITE" id="PS01350">
    <property type="entry name" value="ISPF"/>
    <property type="match status" value="1"/>
</dbReference>
<protein>
    <recommendedName>
        <fullName evidence="1">2-C-methyl-D-erythritol 2,4-cyclodiphosphate synthase</fullName>
        <shortName evidence="1">MECDP-synthase</shortName>
        <shortName evidence="1">MECPP-synthase</shortName>
        <shortName evidence="1">MECPS</shortName>
        <ecNumber evidence="1">4.6.1.12</ecNumber>
    </recommendedName>
</protein>
<accession>A6VQY0</accession>
<organism>
    <name type="scientific">Actinobacillus succinogenes (strain ATCC 55618 / DSM 22257 / CCUG 43843 / 130Z)</name>
    <dbReference type="NCBI Taxonomy" id="339671"/>
    <lineage>
        <taxon>Bacteria</taxon>
        <taxon>Pseudomonadati</taxon>
        <taxon>Pseudomonadota</taxon>
        <taxon>Gammaproteobacteria</taxon>
        <taxon>Pasteurellales</taxon>
        <taxon>Pasteurellaceae</taxon>
        <taxon>Actinobacillus</taxon>
    </lineage>
</organism>
<sequence length="158" mass="17008">MIRIGHGFDVHALGEARPLIIGGVKVPYHTGFIAHSDGDVVLHALTDALLGAVALGDIGKLFPDTDMQFKDIDSRILLREAFRRVKEKGYAVGNVDVTIIAQAPKMRPYIDAMRAVIAEDLQCGIDQVNVKATTTEKLGFTGRSEGIATEAVVLLVKA</sequence>
<name>ISPF_ACTSZ</name>
<proteinExistence type="inferred from homology"/>
<feature type="chain" id="PRO_1000071314" description="2-C-methyl-D-erythritol 2,4-cyclodiphosphate synthase">
    <location>
        <begin position="1"/>
        <end position="158"/>
    </location>
</feature>
<feature type="binding site" evidence="1">
    <location>
        <begin position="9"/>
        <end position="11"/>
    </location>
    <ligand>
        <name>4-CDP-2-C-methyl-D-erythritol 2-phosphate</name>
        <dbReference type="ChEBI" id="CHEBI:57919"/>
    </ligand>
</feature>
<feature type="binding site" evidence="1">
    <location>
        <position position="9"/>
    </location>
    <ligand>
        <name>a divalent metal cation</name>
        <dbReference type="ChEBI" id="CHEBI:60240"/>
    </ligand>
</feature>
<feature type="binding site" evidence="1">
    <location>
        <position position="11"/>
    </location>
    <ligand>
        <name>a divalent metal cation</name>
        <dbReference type="ChEBI" id="CHEBI:60240"/>
    </ligand>
</feature>
<feature type="binding site" evidence="1">
    <location>
        <begin position="35"/>
        <end position="36"/>
    </location>
    <ligand>
        <name>4-CDP-2-C-methyl-D-erythritol 2-phosphate</name>
        <dbReference type="ChEBI" id="CHEBI:57919"/>
    </ligand>
</feature>
<feature type="binding site" evidence="1">
    <location>
        <position position="43"/>
    </location>
    <ligand>
        <name>a divalent metal cation</name>
        <dbReference type="ChEBI" id="CHEBI:60240"/>
    </ligand>
</feature>
<feature type="binding site" evidence="1">
    <location>
        <begin position="57"/>
        <end position="59"/>
    </location>
    <ligand>
        <name>4-CDP-2-C-methyl-D-erythritol 2-phosphate</name>
        <dbReference type="ChEBI" id="CHEBI:57919"/>
    </ligand>
</feature>
<feature type="binding site" evidence="1">
    <location>
        <begin position="62"/>
        <end position="66"/>
    </location>
    <ligand>
        <name>4-CDP-2-C-methyl-D-erythritol 2-phosphate</name>
        <dbReference type="ChEBI" id="CHEBI:57919"/>
    </ligand>
</feature>
<feature type="binding site" evidence="1">
    <location>
        <begin position="133"/>
        <end position="136"/>
    </location>
    <ligand>
        <name>4-CDP-2-C-methyl-D-erythritol 2-phosphate</name>
        <dbReference type="ChEBI" id="CHEBI:57919"/>
    </ligand>
</feature>
<feature type="binding site" evidence="1">
    <location>
        <position position="140"/>
    </location>
    <ligand>
        <name>4-CDP-2-C-methyl-D-erythritol 2-phosphate</name>
        <dbReference type="ChEBI" id="CHEBI:57919"/>
    </ligand>
</feature>
<feature type="binding site" evidence="1">
    <location>
        <position position="143"/>
    </location>
    <ligand>
        <name>4-CDP-2-C-methyl-D-erythritol 2-phosphate</name>
        <dbReference type="ChEBI" id="CHEBI:57919"/>
    </ligand>
</feature>
<feature type="site" description="Transition state stabilizer" evidence="1">
    <location>
        <position position="35"/>
    </location>
</feature>
<feature type="site" description="Transition state stabilizer" evidence="1">
    <location>
        <position position="134"/>
    </location>
</feature>
<keyword id="KW-0414">Isoprene biosynthesis</keyword>
<keyword id="KW-0456">Lyase</keyword>
<keyword id="KW-0479">Metal-binding</keyword>
<keyword id="KW-1185">Reference proteome</keyword>
<evidence type="ECO:0000255" key="1">
    <source>
        <dbReference type="HAMAP-Rule" id="MF_00107"/>
    </source>
</evidence>